<name>MSRP_XANAC</name>
<evidence type="ECO:0000255" key="1">
    <source>
        <dbReference type="HAMAP-Rule" id="MF_01206"/>
    </source>
</evidence>
<evidence type="ECO:0000305" key="2"/>
<reference key="1">
    <citation type="journal article" date="2002" name="Nature">
        <title>Comparison of the genomes of two Xanthomonas pathogens with differing host specificities.</title>
        <authorList>
            <person name="da Silva A.C.R."/>
            <person name="Ferro J.A."/>
            <person name="Reinach F.C."/>
            <person name="Farah C.S."/>
            <person name="Furlan L.R."/>
            <person name="Quaggio R.B."/>
            <person name="Monteiro-Vitorello C.B."/>
            <person name="Van Sluys M.A."/>
            <person name="Almeida N.F. Jr."/>
            <person name="Alves L.M.C."/>
            <person name="do Amaral A.M."/>
            <person name="Bertolini M.C."/>
            <person name="Camargo L.E.A."/>
            <person name="Camarotte G."/>
            <person name="Cannavan F."/>
            <person name="Cardozo J."/>
            <person name="Chambergo F."/>
            <person name="Ciapina L.P."/>
            <person name="Cicarelli R.M.B."/>
            <person name="Coutinho L.L."/>
            <person name="Cursino-Santos J.R."/>
            <person name="El-Dorry H."/>
            <person name="Faria J.B."/>
            <person name="Ferreira A.J.S."/>
            <person name="Ferreira R.C.C."/>
            <person name="Ferro M.I.T."/>
            <person name="Formighieri E.F."/>
            <person name="Franco M.C."/>
            <person name="Greggio C.C."/>
            <person name="Gruber A."/>
            <person name="Katsuyama A.M."/>
            <person name="Kishi L.T."/>
            <person name="Leite R.P."/>
            <person name="Lemos E.G.M."/>
            <person name="Lemos M.V.F."/>
            <person name="Locali E.C."/>
            <person name="Machado M.A."/>
            <person name="Madeira A.M.B.N."/>
            <person name="Martinez-Rossi N.M."/>
            <person name="Martins E.C."/>
            <person name="Meidanis J."/>
            <person name="Menck C.F.M."/>
            <person name="Miyaki C.Y."/>
            <person name="Moon D.H."/>
            <person name="Moreira L.M."/>
            <person name="Novo M.T.M."/>
            <person name="Okura V.K."/>
            <person name="Oliveira M.C."/>
            <person name="Oliveira V.R."/>
            <person name="Pereira H.A."/>
            <person name="Rossi A."/>
            <person name="Sena J.A.D."/>
            <person name="Silva C."/>
            <person name="de Souza R.F."/>
            <person name="Spinola L.A.F."/>
            <person name="Takita M.A."/>
            <person name="Tamura R.E."/>
            <person name="Teixeira E.C."/>
            <person name="Tezza R.I.D."/>
            <person name="Trindade dos Santos M."/>
            <person name="Truffi D."/>
            <person name="Tsai S.M."/>
            <person name="White F.F."/>
            <person name="Setubal J.C."/>
            <person name="Kitajima J.P."/>
        </authorList>
    </citation>
    <scope>NUCLEOTIDE SEQUENCE [LARGE SCALE GENOMIC DNA]</scope>
    <source>
        <strain>306</strain>
    </source>
</reference>
<comment type="function">
    <text evidence="1">Part of the MsrPQ system that repairs oxidized periplasmic proteins containing methionine sulfoxide residues (Met-O), using respiratory chain electrons. Thus protects these proteins from oxidative-stress damage caused by reactive species of oxygen and chlorine generated by the host defense mechanisms. MsrPQ is essential for the maintenance of envelope integrity under bleach stress, rescuing a wide series of structurally unrelated periplasmic proteins from methionine oxidation. The catalytic subunit MsrP is non-stereospecific, being able to reduce both (R-) and (S-) diastereoisomers of methionine sulfoxide.</text>
</comment>
<comment type="catalytic activity">
    <reaction evidence="1">
        <text>L-methionyl-[protein] + a quinone + H2O = L-methionyl-(S)-S-oxide-[protein] + a quinol</text>
        <dbReference type="Rhea" id="RHEA:51292"/>
        <dbReference type="Rhea" id="RHEA-COMP:12313"/>
        <dbReference type="Rhea" id="RHEA-COMP:12315"/>
        <dbReference type="ChEBI" id="CHEBI:15377"/>
        <dbReference type="ChEBI" id="CHEBI:16044"/>
        <dbReference type="ChEBI" id="CHEBI:24646"/>
        <dbReference type="ChEBI" id="CHEBI:44120"/>
        <dbReference type="ChEBI" id="CHEBI:132124"/>
    </reaction>
</comment>
<comment type="catalytic activity">
    <reaction evidence="1">
        <text>L-methionyl-[protein] + a quinone + H2O = L-methionyl-(R)-S-oxide-[protein] + a quinol</text>
        <dbReference type="Rhea" id="RHEA:51296"/>
        <dbReference type="Rhea" id="RHEA-COMP:12313"/>
        <dbReference type="Rhea" id="RHEA-COMP:12314"/>
        <dbReference type="ChEBI" id="CHEBI:15377"/>
        <dbReference type="ChEBI" id="CHEBI:16044"/>
        <dbReference type="ChEBI" id="CHEBI:24646"/>
        <dbReference type="ChEBI" id="CHEBI:45764"/>
        <dbReference type="ChEBI" id="CHEBI:132124"/>
    </reaction>
</comment>
<comment type="cofactor">
    <cofactor evidence="1">
        <name>Mo-molybdopterin</name>
        <dbReference type="ChEBI" id="CHEBI:71302"/>
    </cofactor>
    <text evidence="1">Binds 1 Mo-molybdopterin (Mo-MPT) cofactor per subunit.</text>
</comment>
<comment type="subunit">
    <text evidence="1">Heterodimer of a catalytic subunit (MsrP) and a heme-binding subunit (MsrQ).</text>
</comment>
<comment type="subcellular location">
    <subcellularLocation>
        <location evidence="1">Periplasm</location>
    </subcellularLocation>
    <text evidence="1">Is attached to the inner membrane when interacting with the MsrQ subunit.</text>
</comment>
<comment type="PTM">
    <text evidence="1">Predicted to be exported by the Tat system. The position of the signal peptide cleavage has not been experimentally proven.</text>
</comment>
<comment type="similarity">
    <text evidence="1">Belongs to the MsrP family.</text>
</comment>
<comment type="sequence caution" evidence="2">
    <conflict type="erroneous initiation">
        <sequence resource="EMBL-CDS" id="AAM36515"/>
    </conflict>
</comment>
<sequence>MSFRDALNLPSSEITDESVYRDRRRLLQLLALTPALGVAGCAEADPPPPPKTVVTPAQARSGFRTAEELTRLEDVTSYNNFYEFGTDKTDPSKAAKTLKLSPWTVKVGGECEKPGSLSLDELLKGIASEERIYRLRCVEGWSMVIPWTGVPLGEVLKRFAPTSKAKYVAFTTLADPQQMPGVRYRSINWPYREGLRIDEAMHPLTLLATGLYGKPLPQQNGAPLRLVVPWKYGFKSIKSIVEIRFVEKMPETAWHDLQPSEYGFFSNVNPAVDHPRWSQKTERRIAGTASKLFAERIATKPFNGYADQVASLYAGMDLKKWF</sequence>
<feature type="signal peptide" description="Tat-type signal" evidence="1">
    <location>
        <begin position="1"/>
        <end position="59"/>
    </location>
</feature>
<feature type="chain" id="PRO_0000070698" description="Protein-methionine-sulfoxide reductase catalytic subunit MsrP" evidence="1">
    <location>
        <begin position="60"/>
        <end position="322"/>
    </location>
</feature>
<feature type="binding site" evidence="1">
    <location>
        <position position="79"/>
    </location>
    <ligand>
        <name>Mo-molybdopterin</name>
        <dbReference type="ChEBI" id="CHEBI:71302"/>
    </ligand>
</feature>
<feature type="binding site" evidence="1">
    <location>
        <begin position="82"/>
        <end position="83"/>
    </location>
    <ligand>
        <name>Mo-molybdopterin</name>
        <dbReference type="ChEBI" id="CHEBI:71302"/>
    </ligand>
</feature>
<feature type="binding site" evidence="1">
    <location>
        <position position="137"/>
    </location>
    <ligand>
        <name>Mo-molybdopterin</name>
        <dbReference type="ChEBI" id="CHEBI:71302"/>
    </ligand>
    <ligandPart>
        <name>Mo</name>
        <dbReference type="ChEBI" id="CHEBI:28685"/>
    </ligandPart>
</feature>
<feature type="binding site" evidence="1">
    <location>
        <position position="172"/>
    </location>
    <ligand>
        <name>Mo-molybdopterin</name>
        <dbReference type="ChEBI" id="CHEBI:71302"/>
    </ligand>
</feature>
<feature type="binding site" evidence="1">
    <location>
        <position position="220"/>
    </location>
    <ligand>
        <name>Mo-molybdopterin</name>
        <dbReference type="ChEBI" id="CHEBI:71302"/>
    </ligand>
</feature>
<feature type="binding site" evidence="1">
    <location>
        <position position="225"/>
    </location>
    <ligand>
        <name>Mo-molybdopterin</name>
        <dbReference type="ChEBI" id="CHEBI:71302"/>
    </ligand>
</feature>
<feature type="binding site" evidence="1">
    <location>
        <begin position="236"/>
        <end position="238"/>
    </location>
    <ligand>
        <name>Mo-molybdopterin</name>
        <dbReference type="ChEBI" id="CHEBI:71302"/>
    </ligand>
</feature>
<dbReference type="EC" id="1.8.5.-" evidence="1"/>
<dbReference type="EMBL" id="AE008923">
    <property type="protein sequence ID" value="AAM36515.1"/>
    <property type="status" value="ALT_INIT"/>
    <property type="molecule type" value="Genomic_DNA"/>
</dbReference>
<dbReference type="RefSeq" id="WP_015463058.1">
    <property type="nucleotide sequence ID" value="NC_003919.1"/>
</dbReference>
<dbReference type="SMR" id="Q8PLY8"/>
<dbReference type="GeneID" id="66910805"/>
<dbReference type="KEGG" id="xac:XAC1647"/>
<dbReference type="eggNOG" id="COG2041">
    <property type="taxonomic scope" value="Bacteria"/>
</dbReference>
<dbReference type="HOGENOM" id="CLU_045520_0_0_6"/>
<dbReference type="Proteomes" id="UP000000576">
    <property type="component" value="Chromosome"/>
</dbReference>
<dbReference type="GO" id="GO:0042597">
    <property type="term" value="C:periplasmic space"/>
    <property type="evidence" value="ECO:0007669"/>
    <property type="project" value="UniProtKB-SubCell"/>
</dbReference>
<dbReference type="GO" id="GO:0046872">
    <property type="term" value="F:metal ion binding"/>
    <property type="evidence" value="ECO:0007669"/>
    <property type="project" value="UniProtKB-KW"/>
</dbReference>
<dbReference type="GO" id="GO:0043546">
    <property type="term" value="F:molybdopterin cofactor binding"/>
    <property type="evidence" value="ECO:0007669"/>
    <property type="project" value="UniProtKB-UniRule"/>
</dbReference>
<dbReference type="GO" id="GO:0016672">
    <property type="term" value="F:oxidoreductase activity, acting on a sulfur group of donors, quinone or similar compound as acceptor"/>
    <property type="evidence" value="ECO:0007669"/>
    <property type="project" value="UniProtKB-UniRule"/>
</dbReference>
<dbReference type="GO" id="GO:0030091">
    <property type="term" value="P:protein repair"/>
    <property type="evidence" value="ECO:0007669"/>
    <property type="project" value="UniProtKB-UniRule"/>
</dbReference>
<dbReference type="Gene3D" id="3.90.420.10">
    <property type="entry name" value="Oxidoreductase, molybdopterin-binding domain"/>
    <property type="match status" value="1"/>
</dbReference>
<dbReference type="HAMAP" id="MF_01206">
    <property type="entry name" value="MsrP"/>
    <property type="match status" value="1"/>
</dbReference>
<dbReference type="InterPro" id="IPR022867">
    <property type="entry name" value="MsrP"/>
</dbReference>
<dbReference type="InterPro" id="IPR000572">
    <property type="entry name" value="OxRdtase_Mopterin-bd_dom"/>
</dbReference>
<dbReference type="InterPro" id="IPR036374">
    <property type="entry name" value="OxRdtase_Mopterin-bd_sf"/>
</dbReference>
<dbReference type="NCBIfam" id="NF003767">
    <property type="entry name" value="PRK05363.1"/>
    <property type="match status" value="1"/>
</dbReference>
<dbReference type="PANTHER" id="PTHR43032">
    <property type="entry name" value="PROTEIN-METHIONINE-SULFOXIDE REDUCTASE"/>
    <property type="match status" value="1"/>
</dbReference>
<dbReference type="PANTHER" id="PTHR43032:SF3">
    <property type="entry name" value="PROTEIN-METHIONINE-SULFOXIDE REDUCTASE CATALYTIC SUBUNIT MSRP"/>
    <property type="match status" value="1"/>
</dbReference>
<dbReference type="Pfam" id="PF00174">
    <property type="entry name" value="Oxidored_molyb"/>
    <property type="match status" value="1"/>
</dbReference>
<dbReference type="SUPFAM" id="SSF56524">
    <property type="entry name" value="Oxidoreductase molybdopterin-binding domain"/>
    <property type="match status" value="1"/>
</dbReference>
<accession>Q8PLY8</accession>
<keyword id="KW-0479">Metal-binding</keyword>
<keyword id="KW-0500">Molybdenum</keyword>
<keyword id="KW-0560">Oxidoreductase</keyword>
<keyword id="KW-0574">Periplasm</keyword>
<keyword id="KW-0732">Signal</keyword>
<organism>
    <name type="scientific">Xanthomonas axonopodis pv. citri (strain 306)</name>
    <dbReference type="NCBI Taxonomy" id="190486"/>
    <lineage>
        <taxon>Bacteria</taxon>
        <taxon>Pseudomonadati</taxon>
        <taxon>Pseudomonadota</taxon>
        <taxon>Gammaproteobacteria</taxon>
        <taxon>Lysobacterales</taxon>
        <taxon>Lysobacteraceae</taxon>
        <taxon>Xanthomonas</taxon>
    </lineage>
</organism>
<gene>
    <name evidence="1" type="primary">msrP</name>
    <name type="ordered locus">XAC1647</name>
</gene>
<proteinExistence type="inferred from homology"/>
<protein>
    <recommendedName>
        <fullName evidence="1">Protein-methionine-sulfoxide reductase catalytic subunit MsrP</fullName>
        <ecNumber evidence="1">1.8.5.-</ecNumber>
    </recommendedName>
</protein>